<accession>Q6PR33</accession>
<feature type="chain" id="PRO_0000220095" description="L-2,4-diaminobutyric acid acetyltransferase">
    <location>
        <begin position="1"/>
        <end position="159"/>
    </location>
</feature>
<feature type="domain" description="N-acetyltransferase" evidence="2">
    <location>
        <begin position="1"/>
        <end position="138"/>
    </location>
</feature>
<organism>
    <name type="scientific">Virgibacillus pantothenticus</name>
    <dbReference type="NCBI Taxonomy" id="1473"/>
    <lineage>
        <taxon>Bacteria</taxon>
        <taxon>Bacillati</taxon>
        <taxon>Bacillota</taxon>
        <taxon>Bacilli</taxon>
        <taxon>Bacillales</taxon>
        <taxon>Bacillaceae</taxon>
        <taxon>Virgibacillus</taxon>
    </lineage>
</organism>
<keyword id="KW-0012">Acyltransferase</keyword>
<keyword id="KW-0808">Transferase</keyword>
<protein>
    <recommendedName>
        <fullName>L-2,4-diaminobutyric acid acetyltransferase</fullName>
        <shortName>DABA acetyltransferase</shortName>
        <ecNumber>2.3.1.178</ecNumber>
    </recommendedName>
</protein>
<dbReference type="EC" id="2.3.1.178"/>
<dbReference type="EMBL" id="AY585263">
    <property type="protein sequence ID" value="AAS93806.1"/>
    <property type="molecule type" value="Genomic_DNA"/>
</dbReference>
<dbReference type="RefSeq" id="WP_050352488.1">
    <property type="nucleotide sequence ID" value="NZ_BOSN01000001.1"/>
</dbReference>
<dbReference type="SMR" id="Q6PR33"/>
<dbReference type="GeneID" id="66870976"/>
<dbReference type="OrthoDB" id="2436196at2"/>
<dbReference type="UniPathway" id="UPA00067">
    <property type="reaction ID" value="UER00122"/>
</dbReference>
<dbReference type="GO" id="GO:0033816">
    <property type="term" value="F:diaminobutyrate acetyltransferase activity"/>
    <property type="evidence" value="ECO:0007669"/>
    <property type="project" value="UniProtKB-EC"/>
</dbReference>
<dbReference type="GO" id="GO:0019491">
    <property type="term" value="P:ectoine biosynthetic process"/>
    <property type="evidence" value="ECO:0007669"/>
    <property type="project" value="UniProtKB-UniPathway"/>
</dbReference>
<dbReference type="CDD" id="cd04301">
    <property type="entry name" value="NAT_SF"/>
    <property type="match status" value="1"/>
</dbReference>
<dbReference type="Gene3D" id="3.40.630.30">
    <property type="match status" value="1"/>
</dbReference>
<dbReference type="InterPro" id="IPR016181">
    <property type="entry name" value="Acyl_CoA_acyltransferase"/>
</dbReference>
<dbReference type="InterPro" id="IPR012772">
    <property type="entry name" value="Ectoine_EctA"/>
</dbReference>
<dbReference type="InterPro" id="IPR000182">
    <property type="entry name" value="GNAT_dom"/>
</dbReference>
<dbReference type="NCBIfam" id="TIGR02406">
    <property type="entry name" value="ectoine_EctA"/>
    <property type="match status" value="1"/>
</dbReference>
<dbReference type="Pfam" id="PF00583">
    <property type="entry name" value="Acetyltransf_1"/>
    <property type="match status" value="1"/>
</dbReference>
<dbReference type="SUPFAM" id="SSF55729">
    <property type="entry name" value="Acyl-CoA N-acyltransferases (Nat)"/>
    <property type="match status" value="1"/>
</dbReference>
<dbReference type="PROSITE" id="PS51186">
    <property type="entry name" value="GNAT"/>
    <property type="match status" value="1"/>
</dbReference>
<sequence length="159" mass="17960">MPTKNDGAAVWELIHQIDNLDLNSSYSYLLWCDMFSETSIVVEEEGEVVGFISGFIHPNKPNTLFIWQVAVEAAQRGKGLGTHMLLQLLNRKRIAQVQYIEATVAPSNLPSQYLFLGLAKKLDTECVVGNYYTSVDFPRTGHEDEQLYKIGPIRRANNK</sequence>
<proteinExistence type="inferred from homology"/>
<name>ECTA_VIRPA</name>
<reference key="1">
    <citation type="submission" date="2004-03" db="EMBL/GenBank/DDBJ databases">
        <title>Synthesis of compatible solute ectoine in Virgibacillus pantothenticus is induced by high osmolality and growth in the cold.</title>
        <authorList>
            <person name="Kuhlmann A.U."/>
            <person name="Gimpel S."/>
            <person name="Hoffmann T."/>
            <person name="Bremer E."/>
        </authorList>
    </citation>
    <scope>NUCLEOTIDE SEQUENCE [GENOMIC DNA]</scope>
</reference>
<evidence type="ECO:0000250" key="1"/>
<evidence type="ECO:0000255" key="2">
    <source>
        <dbReference type="PROSITE-ProRule" id="PRU00532"/>
    </source>
</evidence>
<evidence type="ECO:0000305" key="3"/>
<comment type="function">
    <text evidence="1">Catalyzes the acetylation of L-2,4-diaminobutyrate (DABA) to gamma-N-acetyl-alpha,gamma-diaminobutyric acid (ADABA) with acetyl coenzyme A.</text>
</comment>
<comment type="catalytic activity">
    <reaction>
        <text>L-2,4-diaminobutanoate + acetyl-CoA = (2S)-4-acetamido-2-aminobutanoate + CoA + H(+)</text>
        <dbReference type="Rhea" id="RHEA:16901"/>
        <dbReference type="ChEBI" id="CHEBI:15378"/>
        <dbReference type="ChEBI" id="CHEBI:57287"/>
        <dbReference type="ChEBI" id="CHEBI:57288"/>
        <dbReference type="ChEBI" id="CHEBI:58761"/>
        <dbReference type="ChEBI" id="CHEBI:58929"/>
        <dbReference type="EC" id="2.3.1.178"/>
    </reaction>
</comment>
<comment type="pathway">
    <text>Amine and polyamine biosynthesis; ectoine biosynthesis; L-ectoine from L-aspartate 4-semialdehyde: step 2/3.</text>
</comment>
<comment type="similarity">
    <text evidence="3">Belongs to the acetyltransferase family. EctA subfamily.</text>
</comment>
<gene>
    <name type="primary">ectA</name>
</gene>